<accession>A7ZKY2</accession>
<gene>
    <name evidence="1" type="primary">ispE</name>
    <name type="ordered locus">EcE24377A_1356</name>
</gene>
<evidence type="ECO:0000255" key="1">
    <source>
        <dbReference type="HAMAP-Rule" id="MF_00061"/>
    </source>
</evidence>
<protein>
    <recommendedName>
        <fullName evidence="1">4-diphosphocytidyl-2-C-methyl-D-erythritol kinase</fullName>
        <shortName evidence="1">CMK</shortName>
        <ecNumber evidence="1">2.7.1.148</ecNumber>
    </recommendedName>
    <alternativeName>
        <fullName evidence="1">4-(cytidine-5'-diphospho)-2-C-methyl-D-erythritol kinase</fullName>
    </alternativeName>
</protein>
<keyword id="KW-0067">ATP-binding</keyword>
<keyword id="KW-0414">Isoprene biosynthesis</keyword>
<keyword id="KW-0418">Kinase</keyword>
<keyword id="KW-0547">Nucleotide-binding</keyword>
<keyword id="KW-1185">Reference proteome</keyword>
<keyword id="KW-0808">Transferase</keyword>
<organism>
    <name type="scientific">Escherichia coli O139:H28 (strain E24377A / ETEC)</name>
    <dbReference type="NCBI Taxonomy" id="331111"/>
    <lineage>
        <taxon>Bacteria</taxon>
        <taxon>Pseudomonadati</taxon>
        <taxon>Pseudomonadota</taxon>
        <taxon>Gammaproteobacteria</taxon>
        <taxon>Enterobacterales</taxon>
        <taxon>Enterobacteriaceae</taxon>
        <taxon>Escherichia</taxon>
    </lineage>
</organism>
<feature type="chain" id="PRO_1000057418" description="4-diphosphocytidyl-2-C-methyl-D-erythritol kinase">
    <location>
        <begin position="1"/>
        <end position="283"/>
    </location>
</feature>
<feature type="active site" evidence="1">
    <location>
        <position position="10"/>
    </location>
</feature>
<feature type="active site" evidence="1">
    <location>
        <position position="141"/>
    </location>
</feature>
<feature type="binding site" evidence="1">
    <location>
        <begin position="99"/>
        <end position="109"/>
    </location>
    <ligand>
        <name>ATP</name>
        <dbReference type="ChEBI" id="CHEBI:30616"/>
    </ligand>
</feature>
<sequence>MRTQWPSPAKLNLFLYITGQRADGYHTLQTLFQFLDYGDTISIELRDDGDIRLLTPVEGVEHEDNLIVRAARLLMKTAADSGRLPTGSGANISIDKRLPMGGGLGGGSSNAATVLVALNHLWQCGLSMDELAEMGLTLGADVPVFVRGHAAFAEGVGEILTPVDPPEKWYLVAHPGVSIPTPVIFKDPELPRNTPKRSIETLLKCEFSNDCEVIARKRFREVDAVLSWLLEYAPSRLTGTGACVFAEFDTESEARQVLEQAPEWLNGFVAKGVNLSPLHRAML</sequence>
<proteinExistence type="inferred from homology"/>
<comment type="function">
    <text evidence="1">Catalyzes the phosphorylation of the position 2 hydroxy group of 4-diphosphocytidyl-2C-methyl-D-erythritol.</text>
</comment>
<comment type="catalytic activity">
    <reaction evidence="1">
        <text>4-CDP-2-C-methyl-D-erythritol + ATP = 4-CDP-2-C-methyl-D-erythritol 2-phosphate + ADP + H(+)</text>
        <dbReference type="Rhea" id="RHEA:18437"/>
        <dbReference type="ChEBI" id="CHEBI:15378"/>
        <dbReference type="ChEBI" id="CHEBI:30616"/>
        <dbReference type="ChEBI" id="CHEBI:57823"/>
        <dbReference type="ChEBI" id="CHEBI:57919"/>
        <dbReference type="ChEBI" id="CHEBI:456216"/>
        <dbReference type="EC" id="2.7.1.148"/>
    </reaction>
</comment>
<comment type="pathway">
    <text evidence="1">Isoprenoid biosynthesis; isopentenyl diphosphate biosynthesis via DXP pathway; isopentenyl diphosphate from 1-deoxy-D-xylulose 5-phosphate: step 3/6.</text>
</comment>
<comment type="subunit">
    <text evidence="1">Homodimer.</text>
</comment>
<comment type="similarity">
    <text evidence="1">Belongs to the GHMP kinase family. IspE subfamily.</text>
</comment>
<name>ISPE_ECO24</name>
<dbReference type="EC" id="2.7.1.148" evidence="1"/>
<dbReference type="EMBL" id="CP000800">
    <property type="protein sequence ID" value="ABV19217.1"/>
    <property type="molecule type" value="Genomic_DNA"/>
</dbReference>
<dbReference type="RefSeq" id="WP_001260333.1">
    <property type="nucleotide sequence ID" value="NC_009801.1"/>
</dbReference>
<dbReference type="SMR" id="A7ZKY2"/>
<dbReference type="GeneID" id="93775273"/>
<dbReference type="KEGG" id="ecw:EcE24377A_1356"/>
<dbReference type="HOGENOM" id="CLU_053057_3_0_6"/>
<dbReference type="UniPathway" id="UPA00056">
    <property type="reaction ID" value="UER00094"/>
</dbReference>
<dbReference type="Proteomes" id="UP000001122">
    <property type="component" value="Chromosome"/>
</dbReference>
<dbReference type="GO" id="GO:0050515">
    <property type="term" value="F:4-(cytidine 5'-diphospho)-2-C-methyl-D-erythritol kinase activity"/>
    <property type="evidence" value="ECO:0007669"/>
    <property type="project" value="UniProtKB-UniRule"/>
</dbReference>
<dbReference type="GO" id="GO:0005524">
    <property type="term" value="F:ATP binding"/>
    <property type="evidence" value="ECO:0007669"/>
    <property type="project" value="UniProtKB-UniRule"/>
</dbReference>
<dbReference type="GO" id="GO:0019288">
    <property type="term" value="P:isopentenyl diphosphate biosynthetic process, methylerythritol 4-phosphate pathway"/>
    <property type="evidence" value="ECO:0007669"/>
    <property type="project" value="UniProtKB-UniRule"/>
</dbReference>
<dbReference type="GO" id="GO:0016114">
    <property type="term" value="P:terpenoid biosynthetic process"/>
    <property type="evidence" value="ECO:0007669"/>
    <property type="project" value="InterPro"/>
</dbReference>
<dbReference type="FunFam" id="3.30.230.10:FF:000022">
    <property type="entry name" value="4-diphosphocytidyl-2-C-methyl-D-erythritol kinase"/>
    <property type="match status" value="1"/>
</dbReference>
<dbReference type="FunFam" id="3.30.70.890:FF:000004">
    <property type="entry name" value="4-diphosphocytidyl-2-C-methyl-D-erythritol kinase"/>
    <property type="match status" value="1"/>
</dbReference>
<dbReference type="Gene3D" id="3.30.230.10">
    <property type="match status" value="1"/>
</dbReference>
<dbReference type="Gene3D" id="3.30.70.890">
    <property type="entry name" value="GHMP kinase, C-terminal domain"/>
    <property type="match status" value="1"/>
</dbReference>
<dbReference type="HAMAP" id="MF_00061">
    <property type="entry name" value="IspE"/>
    <property type="match status" value="1"/>
</dbReference>
<dbReference type="InterPro" id="IPR013750">
    <property type="entry name" value="GHMP_kinase_C_dom"/>
</dbReference>
<dbReference type="InterPro" id="IPR036554">
    <property type="entry name" value="GHMP_kinase_C_sf"/>
</dbReference>
<dbReference type="InterPro" id="IPR006204">
    <property type="entry name" value="GHMP_kinase_N_dom"/>
</dbReference>
<dbReference type="InterPro" id="IPR004424">
    <property type="entry name" value="IspE"/>
</dbReference>
<dbReference type="InterPro" id="IPR020568">
    <property type="entry name" value="Ribosomal_Su5_D2-typ_SF"/>
</dbReference>
<dbReference type="InterPro" id="IPR014721">
    <property type="entry name" value="Ribsml_uS5_D2-typ_fold_subgr"/>
</dbReference>
<dbReference type="NCBIfam" id="TIGR00154">
    <property type="entry name" value="ispE"/>
    <property type="match status" value="1"/>
</dbReference>
<dbReference type="PANTHER" id="PTHR43527">
    <property type="entry name" value="4-DIPHOSPHOCYTIDYL-2-C-METHYL-D-ERYTHRITOL KINASE, CHLOROPLASTIC"/>
    <property type="match status" value="1"/>
</dbReference>
<dbReference type="PANTHER" id="PTHR43527:SF2">
    <property type="entry name" value="4-DIPHOSPHOCYTIDYL-2-C-METHYL-D-ERYTHRITOL KINASE, CHLOROPLASTIC"/>
    <property type="match status" value="1"/>
</dbReference>
<dbReference type="Pfam" id="PF08544">
    <property type="entry name" value="GHMP_kinases_C"/>
    <property type="match status" value="1"/>
</dbReference>
<dbReference type="Pfam" id="PF00288">
    <property type="entry name" value="GHMP_kinases_N"/>
    <property type="match status" value="1"/>
</dbReference>
<dbReference type="PIRSF" id="PIRSF010376">
    <property type="entry name" value="IspE"/>
    <property type="match status" value="1"/>
</dbReference>
<dbReference type="SUPFAM" id="SSF55060">
    <property type="entry name" value="GHMP Kinase, C-terminal domain"/>
    <property type="match status" value="1"/>
</dbReference>
<dbReference type="SUPFAM" id="SSF54211">
    <property type="entry name" value="Ribosomal protein S5 domain 2-like"/>
    <property type="match status" value="1"/>
</dbReference>
<reference key="1">
    <citation type="journal article" date="2008" name="J. Bacteriol.">
        <title>The pangenome structure of Escherichia coli: comparative genomic analysis of E. coli commensal and pathogenic isolates.</title>
        <authorList>
            <person name="Rasko D.A."/>
            <person name="Rosovitz M.J."/>
            <person name="Myers G.S.A."/>
            <person name="Mongodin E.F."/>
            <person name="Fricke W.F."/>
            <person name="Gajer P."/>
            <person name="Crabtree J."/>
            <person name="Sebaihia M."/>
            <person name="Thomson N.R."/>
            <person name="Chaudhuri R."/>
            <person name="Henderson I.R."/>
            <person name="Sperandio V."/>
            <person name="Ravel J."/>
        </authorList>
    </citation>
    <scope>NUCLEOTIDE SEQUENCE [LARGE SCALE GENOMIC DNA]</scope>
    <source>
        <strain>E24377A / ETEC</strain>
    </source>
</reference>